<keyword id="KW-0012">Acyltransferase</keyword>
<keyword id="KW-0963">Cytoplasm</keyword>
<keyword id="KW-0539">Nucleus</keyword>
<keyword id="KW-1185">Reference proteome</keyword>
<keyword id="KW-0808">Transferase</keyword>
<proteinExistence type="evidence at transcript level"/>
<evidence type="ECO:0000250" key="1"/>
<evidence type="ECO:0000250" key="2">
    <source>
        <dbReference type="UniProtKB" id="P61599"/>
    </source>
</evidence>
<evidence type="ECO:0000255" key="3">
    <source>
        <dbReference type="PROSITE-ProRule" id="PRU00532"/>
    </source>
</evidence>
<evidence type="ECO:0000305" key="4"/>
<gene>
    <name type="primary">naa20</name>
    <name type="synonym">nat5</name>
    <name type="ORF">zgc:110819</name>
</gene>
<protein>
    <recommendedName>
        <fullName>N-alpha-acetyltransferase 20</fullName>
        <ecNumber evidence="2">2.3.1.254</ecNumber>
    </recommendedName>
    <alternativeName>
        <fullName>Methionine N-acetyltransferase</fullName>
    </alternativeName>
    <alternativeName>
        <fullName>N-acetyltransferase 5</fullName>
    </alternativeName>
    <alternativeName>
        <fullName>N-terminal acetyltransferase B complex catalytic subunit NAA20</fullName>
    </alternativeName>
    <alternativeName>
        <fullName>N-terminal acetyltransferase B complex catalytic subunit NAT5</fullName>
        <shortName>NatB complex subunit NAT5</shortName>
    </alternativeName>
    <alternativeName>
        <fullName>NatB catalytic subunit</fullName>
    </alternativeName>
</protein>
<organism>
    <name type="scientific">Danio rerio</name>
    <name type="common">Zebrafish</name>
    <name type="synonym">Brachydanio rerio</name>
    <dbReference type="NCBI Taxonomy" id="7955"/>
    <lineage>
        <taxon>Eukaryota</taxon>
        <taxon>Metazoa</taxon>
        <taxon>Chordata</taxon>
        <taxon>Craniata</taxon>
        <taxon>Vertebrata</taxon>
        <taxon>Euteleostomi</taxon>
        <taxon>Actinopterygii</taxon>
        <taxon>Neopterygii</taxon>
        <taxon>Teleostei</taxon>
        <taxon>Ostariophysi</taxon>
        <taxon>Cypriniformes</taxon>
        <taxon>Danionidae</taxon>
        <taxon>Danioninae</taxon>
        <taxon>Danio</taxon>
    </lineage>
</organism>
<name>NAA20_DANRE</name>
<accession>Q58ED9</accession>
<accession>A2VD34</accession>
<dbReference type="EC" id="2.3.1.254" evidence="2"/>
<dbReference type="EMBL" id="BC091957">
    <property type="protein sequence ID" value="AAH91957.1"/>
    <property type="molecule type" value="mRNA"/>
</dbReference>
<dbReference type="EMBL" id="BC129286">
    <property type="protein sequence ID" value="AAI29287.1"/>
    <property type="molecule type" value="mRNA"/>
</dbReference>
<dbReference type="RefSeq" id="NP_001014351.1">
    <property type="nucleotide sequence ID" value="NM_001014329.2"/>
</dbReference>
<dbReference type="SMR" id="Q58ED9"/>
<dbReference type="FunCoup" id="Q58ED9">
    <property type="interactions" value="1977"/>
</dbReference>
<dbReference type="STRING" id="7955.ENSDARP00000057699"/>
<dbReference type="PaxDb" id="7955-ENSDARP00000057699"/>
<dbReference type="Ensembl" id="ENSDART00000057700">
    <property type="protein sequence ID" value="ENSDARP00000057699"/>
    <property type="gene ID" value="ENSDARG00000039493"/>
</dbReference>
<dbReference type="GeneID" id="541516"/>
<dbReference type="KEGG" id="dre:541516"/>
<dbReference type="AGR" id="ZFIN:ZDB-GENE-050327-47"/>
<dbReference type="CTD" id="51126"/>
<dbReference type="ZFIN" id="ZDB-GENE-050327-47">
    <property type="gene designation" value="naa20"/>
</dbReference>
<dbReference type="eggNOG" id="KOG3234">
    <property type="taxonomic scope" value="Eukaryota"/>
</dbReference>
<dbReference type="HOGENOM" id="CLU_013985_7_1_1"/>
<dbReference type="InParanoid" id="Q58ED9"/>
<dbReference type="OMA" id="EQHPSMR"/>
<dbReference type="OrthoDB" id="10264728at2759"/>
<dbReference type="PhylomeDB" id="Q58ED9"/>
<dbReference type="TreeFam" id="TF105829"/>
<dbReference type="PRO" id="PR:Q58ED9"/>
<dbReference type="Proteomes" id="UP000000437">
    <property type="component" value="Chromosome 20"/>
</dbReference>
<dbReference type="Bgee" id="ENSDARG00000039493">
    <property type="expression patterns" value="Expressed in muscle tissue and 27 other cell types or tissues"/>
</dbReference>
<dbReference type="ExpressionAtlas" id="Q58ED9">
    <property type="expression patterns" value="baseline and differential"/>
</dbReference>
<dbReference type="GO" id="GO:0005737">
    <property type="term" value="C:cytoplasm"/>
    <property type="evidence" value="ECO:0000250"/>
    <property type="project" value="UniProtKB"/>
</dbReference>
<dbReference type="GO" id="GO:0031416">
    <property type="term" value="C:NatB complex"/>
    <property type="evidence" value="ECO:0000318"/>
    <property type="project" value="GO_Central"/>
</dbReference>
<dbReference type="GO" id="GO:0005634">
    <property type="term" value="C:nucleus"/>
    <property type="evidence" value="ECO:0000250"/>
    <property type="project" value="UniProtKB"/>
</dbReference>
<dbReference type="GO" id="GO:0120518">
    <property type="term" value="F:protein N-terminal-methionine acetyltransferase activity"/>
    <property type="evidence" value="ECO:0007669"/>
    <property type="project" value="UniProtKB-EC"/>
</dbReference>
<dbReference type="GO" id="GO:0004596">
    <property type="term" value="F:protein-N-terminal amino-acid acetyltransferase activity"/>
    <property type="evidence" value="ECO:0000318"/>
    <property type="project" value="GO_Central"/>
</dbReference>
<dbReference type="GO" id="GO:0017190">
    <property type="term" value="P:N-terminal peptidyl-aspartic acid acetylation"/>
    <property type="evidence" value="ECO:0000250"/>
    <property type="project" value="UniProtKB"/>
</dbReference>
<dbReference type="GO" id="GO:0018002">
    <property type="term" value="P:N-terminal peptidyl-glutamic acid acetylation"/>
    <property type="evidence" value="ECO:0000250"/>
    <property type="project" value="UniProtKB"/>
</dbReference>
<dbReference type="GO" id="GO:0017192">
    <property type="term" value="P:N-terminal peptidyl-glutamine acetylation"/>
    <property type="evidence" value="ECO:0000250"/>
    <property type="project" value="UniProtKB"/>
</dbReference>
<dbReference type="GO" id="GO:0006474">
    <property type="term" value="P:N-terminal protein amino acid acetylation"/>
    <property type="evidence" value="ECO:0000250"/>
    <property type="project" value="UniProtKB"/>
</dbReference>
<dbReference type="GO" id="GO:0032956">
    <property type="term" value="P:regulation of actin cytoskeleton organization"/>
    <property type="evidence" value="ECO:0000318"/>
    <property type="project" value="GO_Central"/>
</dbReference>
<dbReference type="CDD" id="cd04301">
    <property type="entry name" value="NAT_SF"/>
    <property type="match status" value="1"/>
</dbReference>
<dbReference type="FunFam" id="3.40.630.30:FF:000015">
    <property type="entry name" value="N-alpha-acetyltransferase 20 isoform X1"/>
    <property type="match status" value="1"/>
</dbReference>
<dbReference type="Gene3D" id="3.40.630.30">
    <property type="match status" value="1"/>
</dbReference>
<dbReference type="InterPro" id="IPR016181">
    <property type="entry name" value="Acyl_CoA_acyltransferase"/>
</dbReference>
<dbReference type="InterPro" id="IPR000182">
    <property type="entry name" value="GNAT_dom"/>
</dbReference>
<dbReference type="InterPro" id="IPR051646">
    <property type="entry name" value="NatB_acetyltransferase_subunit"/>
</dbReference>
<dbReference type="PANTHER" id="PTHR45910">
    <property type="entry name" value="N-ALPHA-ACETYLTRANSFERASE 20"/>
    <property type="match status" value="1"/>
</dbReference>
<dbReference type="PANTHER" id="PTHR45910:SF1">
    <property type="entry name" value="N-ALPHA-ACETYLTRANSFERASE 20"/>
    <property type="match status" value="1"/>
</dbReference>
<dbReference type="Pfam" id="PF00583">
    <property type="entry name" value="Acetyltransf_1"/>
    <property type="match status" value="1"/>
</dbReference>
<dbReference type="SUPFAM" id="SSF55729">
    <property type="entry name" value="Acyl-CoA N-acyltransferases (Nat)"/>
    <property type="match status" value="1"/>
</dbReference>
<dbReference type="PROSITE" id="PS51186">
    <property type="entry name" value="GNAT"/>
    <property type="match status" value="1"/>
</dbReference>
<sequence length="178" mass="20358">MTTLRAFTCDDLFKFNNINLDPLTETYGIPFYLQYLAHWPEYFIVAEAPGGELMGYIMGKAEGSVAREEWHGHVTALSVAPEFRRLGLAAKLMEMLEEISERKGGFFVDLFVRVSNQVAVNMYKQLGYSVYRTVIEYYSASNGEPDEDAYDMRKALSRDTEKKSIIPLPHPVRPEDIE</sequence>
<comment type="function">
    <text evidence="2">Catalytic subunit of the NatB complex which catalyzes acetylation of the N-terminal methionine residues of peptides beginning with Met-Asp, Met-Glu, Met-Asn and Met-Gln. Proteins with cell cycle functions are overrepresented in the pool of NatB substrates. Required for maintaining the structure and function of actomyosin fibers and for proper cellular migration.</text>
</comment>
<comment type="catalytic activity">
    <reaction evidence="2">
        <text>N-terminal L-methionyl-L-asparaginyl-[protein] + acetyl-CoA = N-terminal N(alpha)-acetyl-L-methionyl-L-asparaginyl-[protein] + CoA + H(+)</text>
        <dbReference type="Rhea" id="RHEA:50484"/>
        <dbReference type="Rhea" id="RHEA-COMP:12694"/>
        <dbReference type="Rhea" id="RHEA-COMP:12695"/>
        <dbReference type="ChEBI" id="CHEBI:15378"/>
        <dbReference type="ChEBI" id="CHEBI:57287"/>
        <dbReference type="ChEBI" id="CHEBI:57288"/>
        <dbReference type="ChEBI" id="CHEBI:133356"/>
        <dbReference type="ChEBI" id="CHEBI:133358"/>
        <dbReference type="EC" id="2.3.1.254"/>
    </reaction>
</comment>
<comment type="catalytic activity">
    <reaction evidence="2">
        <text>N-terminal L-methionyl-L-glutaminyl-[protein] + acetyl-CoA = N-terminal N(alpha)-acetyl-L-methionyl-L-glutaminyl-[protein] + CoA + H(+)</text>
        <dbReference type="Rhea" id="RHEA:50492"/>
        <dbReference type="Rhea" id="RHEA-COMP:12698"/>
        <dbReference type="Rhea" id="RHEA-COMP:12699"/>
        <dbReference type="ChEBI" id="CHEBI:15378"/>
        <dbReference type="ChEBI" id="CHEBI:57287"/>
        <dbReference type="ChEBI" id="CHEBI:57288"/>
        <dbReference type="ChEBI" id="CHEBI:133361"/>
        <dbReference type="ChEBI" id="CHEBI:133362"/>
        <dbReference type="EC" id="2.3.1.254"/>
    </reaction>
</comment>
<comment type="catalytic activity">
    <reaction evidence="2">
        <text>N-terminal L-methionyl-L-aspartyl-[protein] + acetyl-CoA = N-terminal N(alpha)-acetyl-L-methionyl-L-aspartyl-[protein] + CoA + H(+)</text>
        <dbReference type="Rhea" id="RHEA:50480"/>
        <dbReference type="Rhea" id="RHEA-COMP:12692"/>
        <dbReference type="Rhea" id="RHEA-COMP:12693"/>
        <dbReference type="ChEBI" id="CHEBI:15378"/>
        <dbReference type="ChEBI" id="CHEBI:57287"/>
        <dbReference type="ChEBI" id="CHEBI:57288"/>
        <dbReference type="ChEBI" id="CHEBI:133045"/>
        <dbReference type="ChEBI" id="CHEBI:133063"/>
        <dbReference type="EC" id="2.3.1.254"/>
    </reaction>
</comment>
<comment type="catalytic activity">
    <reaction evidence="2">
        <text>N-terminal L-methionyl-L-glutamyl-[protein] + acetyl-CoA = N-terminal N(alpha)-acetyl-L-methionyl-L-glutamyl-[protein] + CoA + H(+)</text>
        <dbReference type="Rhea" id="RHEA:50488"/>
        <dbReference type="Rhea" id="RHEA-COMP:12696"/>
        <dbReference type="Rhea" id="RHEA-COMP:12697"/>
        <dbReference type="ChEBI" id="CHEBI:15378"/>
        <dbReference type="ChEBI" id="CHEBI:57287"/>
        <dbReference type="ChEBI" id="CHEBI:57288"/>
        <dbReference type="ChEBI" id="CHEBI:133359"/>
        <dbReference type="ChEBI" id="CHEBI:133360"/>
        <dbReference type="EC" id="2.3.1.254"/>
    </reaction>
</comment>
<comment type="subunit">
    <text evidence="1">Component of the N-terminal acetyltransferase B (NatB) complex which is composed of naa20 and naa25.</text>
</comment>
<comment type="subcellular location">
    <subcellularLocation>
        <location evidence="2">Cytoplasm</location>
    </subcellularLocation>
    <subcellularLocation>
        <location evidence="2">Nucleus</location>
    </subcellularLocation>
</comment>
<comment type="similarity">
    <text evidence="4">Belongs to the acetyltransferase family. ARD1 subfamily.</text>
</comment>
<feature type="chain" id="PRO_0000249841" description="N-alpha-acetyltransferase 20">
    <location>
        <begin position="1"/>
        <end position="178"/>
    </location>
</feature>
<feature type="domain" description="N-acetyltransferase" evidence="3">
    <location>
        <begin position="2"/>
        <end position="157"/>
    </location>
</feature>
<feature type="sequence conflict" description="In Ref. 1; AAI29287." evidence="4" ref="1">
    <original>L</original>
    <variation>S</variation>
    <location>
        <position position="96"/>
    </location>
</feature>
<reference key="1">
    <citation type="submission" date="2005-03" db="EMBL/GenBank/DDBJ databases">
        <authorList>
            <consortium name="NIH - Zebrafish Gene Collection (ZGC) project"/>
        </authorList>
    </citation>
    <scope>NUCLEOTIDE SEQUENCE [LARGE SCALE MRNA]</scope>
    <source>
        <tissue>Embryo</tissue>
    </source>
</reference>